<keyword id="KW-0009">Actin-binding</keyword>
<keyword id="KW-0025">Alternative splicing</keyword>
<keyword id="KW-0067">ATP-binding</keyword>
<keyword id="KW-0112">Calmodulin-binding</keyword>
<keyword id="KW-1017">Isopeptide bond</keyword>
<keyword id="KW-0505">Motor protein</keyword>
<keyword id="KW-0518">Myosin</keyword>
<keyword id="KW-0547">Nucleotide-binding</keyword>
<keyword id="KW-0597">Phosphoprotein</keyword>
<keyword id="KW-1185">Reference proteome</keyword>
<keyword id="KW-0677">Repeat</keyword>
<keyword id="KW-0832">Ubl conjugation</keyword>
<comment type="function">
    <text>Motor protein that may participate in process critical to neuronal development and function such as cell migration, neurite outgrowth and vesicular transport.</text>
</comment>
<comment type="alternative products">
    <event type="alternative splicing"/>
    <isoform>
        <id>P46735-1</id>
        <name>1</name>
        <sequence type="displayed"/>
    </isoform>
    <isoform>
        <id>P46735-2</id>
        <name>2</name>
        <sequence type="described" ref="VSP_003347"/>
    </isoform>
</comment>
<comment type="tissue specificity">
    <text>Prominent expression is seen in the brain, lung and liver. It is also expressed in the heart and testis. A high level expression is seen in virtually all neurons (but not glia) in the postnatal and adult mouse brain and in neuroblasts of the cerebellar external granular layer.</text>
</comment>
<comment type="similarity">
    <text evidence="7">Belongs to the TRAFAC class myosin-kinesin ATPase superfamily. Myosin family.</text>
</comment>
<comment type="caution">
    <text evidence="7">Represents an unconventional myosin. This protein should not be confused with the conventional myosin-1 (MYH1).</text>
</comment>
<dbReference type="EMBL" id="L00923">
    <property type="protein sequence ID" value="AAA39800.1"/>
    <property type="molecule type" value="mRNA"/>
</dbReference>
<dbReference type="EMBL" id="AK141207">
    <property type="protein sequence ID" value="BAE24587.1"/>
    <property type="molecule type" value="mRNA"/>
</dbReference>
<dbReference type="EMBL" id="CH466548">
    <property type="protein sequence ID" value="EDK99961.1"/>
    <property type="molecule type" value="Genomic_DNA"/>
</dbReference>
<dbReference type="EMBL" id="BC046300">
    <property type="protein sequence ID" value="AAH46300.1"/>
    <property type="molecule type" value="mRNA"/>
</dbReference>
<dbReference type="EMBL" id="X69987">
    <property type="protein sequence ID" value="CAA49604.1"/>
    <property type="molecule type" value="mRNA"/>
</dbReference>
<dbReference type="CCDS" id="CCDS14942.1">
    <molecule id="P46735-1"/>
</dbReference>
<dbReference type="CCDS" id="CCDS69887.1">
    <molecule id="P46735-2"/>
</dbReference>
<dbReference type="PIR" id="A45438">
    <property type="entry name" value="A45438"/>
</dbReference>
<dbReference type="RefSeq" id="NP_034993.2">
    <molecule id="P46735-1"/>
    <property type="nucleotide sequence ID" value="NM_010863.5"/>
</dbReference>
<dbReference type="SMR" id="P46735"/>
<dbReference type="BioGRID" id="201663">
    <property type="interactions" value="14"/>
</dbReference>
<dbReference type="FunCoup" id="P46735">
    <property type="interactions" value="747"/>
</dbReference>
<dbReference type="IntAct" id="P46735">
    <property type="interactions" value="6"/>
</dbReference>
<dbReference type="MINT" id="P46735"/>
<dbReference type="STRING" id="10090.ENSMUSP00000018561"/>
<dbReference type="GlyGen" id="P46735">
    <property type="glycosylation" value="1 site, 1 O-linked glycan (1 site)"/>
</dbReference>
<dbReference type="iPTMnet" id="P46735"/>
<dbReference type="PhosphoSitePlus" id="P46735"/>
<dbReference type="SwissPalm" id="P46735"/>
<dbReference type="jPOST" id="P46735"/>
<dbReference type="PaxDb" id="10090-ENSMUSP00000018561"/>
<dbReference type="PeptideAtlas" id="P46735"/>
<dbReference type="ProteomicsDB" id="287579">
    <molecule id="P46735-1"/>
</dbReference>
<dbReference type="ProteomicsDB" id="287580">
    <molecule id="P46735-2"/>
</dbReference>
<dbReference type="Pumba" id="P46735"/>
<dbReference type="Antibodypedia" id="2858">
    <property type="antibodies" value="125 antibodies from 31 providers"/>
</dbReference>
<dbReference type="DNASU" id="17912"/>
<dbReference type="Ensembl" id="ENSMUST00000046390.14">
    <molecule id="P46735-1"/>
    <property type="protein sequence ID" value="ENSMUSP00000040447.8"/>
    <property type="gene ID" value="ENSMUSG00000018417.15"/>
</dbReference>
<dbReference type="GeneID" id="17912"/>
<dbReference type="KEGG" id="mmu:17912"/>
<dbReference type="UCSC" id="uc007axr.3">
    <molecule id="P46735-1"/>
    <property type="organism name" value="mouse"/>
</dbReference>
<dbReference type="AGR" id="MGI:107752"/>
<dbReference type="CTD" id="4430"/>
<dbReference type="MGI" id="MGI:107752">
    <property type="gene designation" value="Myo1b"/>
</dbReference>
<dbReference type="VEuPathDB" id="HostDB:ENSMUSG00000018417"/>
<dbReference type="eggNOG" id="KOG0164">
    <property type="taxonomic scope" value="Eukaryota"/>
</dbReference>
<dbReference type="GeneTree" id="ENSGT00940000155752"/>
<dbReference type="InParanoid" id="P46735"/>
<dbReference type="OrthoDB" id="6108017at2759"/>
<dbReference type="BioGRID-ORCS" id="17912">
    <property type="hits" value="0 hits in 77 CRISPR screens"/>
</dbReference>
<dbReference type="CD-CODE" id="CE726F99">
    <property type="entry name" value="Postsynaptic density"/>
</dbReference>
<dbReference type="ChiTaRS" id="Myo1b">
    <property type="organism name" value="mouse"/>
</dbReference>
<dbReference type="PRO" id="PR:P46735"/>
<dbReference type="Proteomes" id="UP000000589">
    <property type="component" value="Chromosome 1"/>
</dbReference>
<dbReference type="RNAct" id="P46735">
    <property type="molecule type" value="protein"/>
</dbReference>
<dbReference type="Bgee" id="ENSMUSG00000018417">
    <property type="expression patterns" value="Expressed in undifferentiated genital tubercle and 270 other cell types or tissues"/>
</dbReference>
<dbReference type="ExpressionAtlas" id="P46735">
    <property type="expression patterns" value="baseline and differential"/>
</dbReference>
<dbReference type="GO" id="GO:0005903">
    <property type="term" value="C:brush border"/>
    <property type="evidence" value="ECO:0000314"/>
    <property type="project" value="UniProtKB"/>
</dbReference>
<dbReference type="GO" id="GO:0071944">
    <property type="term" value="C:cell periphery"/>
    <property type="evidence" value="ECO:0000250"/>
    <property type="project" value="UniProtKB"/>
</dbReference>
<dbReference type="GO" id="GO:0005737">
    <property type="term" value="C:cytoplasm"/>
    <property type="evidence" value="ECO:0000250"/>
    <property type="project" value="UniProtKB"/>
</dbReference>
<dbReference type="GO" id="GO:0030175">
    <property type="term" value="C:filopodium"/>
    <property type="evidence" value="ECO:0000250"/>
    <property type="project" value="UniProtKB"/>
</dbReference>
<dbReference type="GO" id="GO:0016459">
    <property type="term" value="C:myosin complex"/>
    <property type="evidence" value="ECO:0007669"/>
    <property type="project" value="UniProtKB-KW"/>
</dbReference>
<dbReference type="GO" id="GO:0005886">
    <property type="term" value="C:plasma membrane"/>
    <property type="evidence" value="ECO:0000250"/>
    <property type="project" value="UniProtKB"/>
</dbReference>
<dbReference type="GO" id="GO:0003779">
    <property type="term" value="F:actin binding"/>
    <property type="evidence" value="ECO:0007669"/>
    <property type="project" value="UniProtKB-KW"/>
</dbReference>
<dbReference type="GO" id="GO:0005524">
    <property type="term" value="F:ATP binding"/>
    <property type="evidence" value="ECO:0000250"/>
    <property type="project" value="UniProtKB"/>
</dbReference>
<dbReference type="GO" id="GO:0005516">
    <property type="term" value="F:calmodulin binding"/>
    <property type="evidence" value="ECO:0007669"/>
    <property type="project" value="UniProtKB-KW"/>
</dbReference>
<dbReference type="GO" id="GO:0000146">
    <property type="term" value="F:microfilament motor activity"/>
    <property type="evidence" value="ECO:0000250"/>
    <property type="project" value="UniProtKB"/>
</dbReference>
<dbReference type="GO" id="GO:0005547">
    <property type="term" value="F:phosphatidylinositol-3,4,5-trisphosphate binding"/>
    <property type="evidence" value="ECO:0000250"/>
    <property type="project" value="UniProtKB"/>
</dbReference>
<dbReference type="GO" id="GO:0005546">
    <property type="term" value="F:phosphatidylinositol-4,5-bisphosphate binding"/>
    <property type="evidence" value="ECO:0000250"/>
    <property type="project" value="UniProtKB"/>
</dbReference>
<dbReference type="GO" id="GO:0051017">
    <property type="term" value="P:actin filament bundle assembly"/>
    <property type="evidence" value="ECO:0000250"/>
    <property type="project" value="UniProtKB"/>
</dbReference>
<dbReference type="GO" id="GO:0030048">
    <property type="term" value="P:actin filament-based movement"/>
    <property type="evidence" value="ECO:0000250"/>
    <property type="project" value="UniProtKB"/>
</dbReference>
<dbReference type="GO" id="GO:0033572">
    <property type="term" value="P:transferrin transport"/>
    <property type="evidence" value="ECO:0000314"/>
    <property type="project" value="MGI"/>
</dbReference>
<dbReference type="CDD" id="cd01378">
    <property type="entry name" value="MYSc_Myo1"/>
    <property type="match status" value="1"/>
</dbReference>
<dbReference type="FunFam" id="1.20.5.4820:FF:000013">
    <property type="entry name" value="LOW QUALITY PROTEIN: unconventional myosin-Ib"/>
    <property type="match status" value="1"/>
</dbReference>
<dbReference type="FunFam" id="1.10.10.820:FF:000001">
    <property type="entry name" value="Myosin heavy chain"/>
    <property type="match status" value="1"/>
</dbReference>
<dbReference type="FunFam" id="1.20.5.190:FF:000007">
    <property type="entry name" value="Myosin-ib isoform 2"/>
    <property type="match status" value="1"/>
</dbReference>
<dbReference type="FunFam" id="3.40.850.10:FF:000101">
    <property type="entry name" value="Slow myosin heavy chain 2"/>
    <property type="match status" value="1"/>
</dbReference>
<dbReference type="FunFam" id="1.20.58.530:FF:000004">
    <property type="entry name" value="Unconventional myosin ID"/>
    <property type="match status" value="1"/>
</dbReference>
<dbReference type="FunFam" id="1.20.120.720:FF:000004">
    <property type="entry name" value="unconventional myosin-Ib isoform X1"/>
    <property type="match status" value="1"/>
</dbReference>
<dbReference type="FunFam" id="1.20.5.190:FF:000011">
    <property type="entry name" value="unconventional myosin-Ib isoform X1"/>
    <property type="match status" value="1"/>
</dbReference>
<dbReference type="Gene3D" id="1.10.10.820">
    <property type="match status" value="1"/>
</dbReference>
<dbReference type="Gene3D" id="1.20.5.190">
    <property type="match status" value="2"/>
</dbReference>
<dbReference type="Gene3D" id="1.20.58.530">
    <property type="match status" value="1"/>
</dbReference>
<dbReference type="Gene3D" id="6.20.240.20">
    <property type="match status" value="1"/>
</dbReference>
<dbReference type="Gene3D" id="3.40.850.10">
    <property type="entry name" value="Kinesin motor domain"/>
    <property type="match status" value="1"/>
</dbReference>
<dbReference type="Gene3D" id="1.20.120.720">
    <property type="entry name" value="Myosin VI head, motor domain, U50 subdomain"/>
    <property type="match status" value="1"/>
</dbReference>
<dbReference type="InterPro" id="IPR000048">
    <property type="entry name" value="IQ_motif_EF-hand-BS"/>
</dbReference>
<dbReference type="InterPro" id="IPR036961">
    <property type="entry name" value="Kinesin_motor_dom_sf"/>
</dbReference>
<dbReference type="InterPro" id="IPR001609">
    <property type="entry name" value="Myosin_head_motor_dom-like"/>
</dbReference>
<dbReference type="InterPro" id="IPR010926">
    <property type="entry name" value="Myosin_TH1"/>
</dbReference>
<dbReference type="InterPro" id="IPR036072">
    <property type="entry name" value="MYSc_Myo1"/>
</dbReference>
<dbReference type="InterPro" id="IPR027417">
    <property type="entry name" value="P-loop_NTPase"/>
</dbReference>
<dbReference type="PANTHER" id="PTHR13140">
    <property type="entry name" value="MYOSIN"/>
    <property type="match status" value="1"/>
</dbReference>
<dbReference type="PANTHER" id="PTHR13140:SF277">
    <property type="entry name" value="UNCONVENTIONAL MYOSIN-IB"/>
    <property type="match status" value="1"/>
</dbReference>
<dbReference type="Pfam" id="PF00612">
    <property type="entry name" value="IQ"/>
    <property type="match status" value="2"/>
</dbReference>
<dbReference type="Pfam" id="PF00063">
    <property type="entry name" value="Myosin_head"/>
    <property type="match status" value="1"/>
</dbReference>
<dbReference type="Pfam" id="PF06017">
    <property type="entry name" value="Myosin_TH1"/>
    <property type="match status" value="1"/>
</dbReference>
<dbReference type="PRINTS" id="PR00193">
    <property type="entry name" value="MYOSINHEAVY"/>
</dbReference>
<dbReference type="SMART" id="SM00015">
    <property type="entry name" value="IQ"/>
    <property type="match status" value="5"/>
</dbReference>
<dbReference type="SMART" id="SM00242">
    <property type="entry name" value="MYSc"/>
    <property type="match status" value="1"/>
</dbReference>
<dbReference type="SUPFAM" id="SSF52540">
    <property type="entry name" value="P-loop containing nucleoside triphosphate hydrolases"/>
    <property type="match status" value="2"/>
</dbReference>
<dbReference type="PROSITE" id="PS50096">
    <property type="entry name" value="IQ"/>
    <property type="match status" value="4"/>
</dbReference>
<dbReference type="PROSITE" id="PS51456">
    <property type="entry name" value="MYOSIN_MOTOR"/>
    <property type="match status" value="1"/>
</dbReference>
<dbReference type="PROSITE" id="PS51757">
    <property type="entry name" value="TH1"/>
    <property type="match status" value="1"/>
</dbReference>
<name>MYO1B_MOUSE</name>
<sequence length="1107" mass="128564">MAKMEVKSSLLDNMIGVGDMVLLEPLNEETFIDNLKKRFDHNEIYTYIGSVVISVNPYRSLPIYSPEKVEDYRNRNFYELSPHIFALSDEAYRSLRDQDKDQCILITGESGAGKTEASKLVMSYVAAVCGKGAEVNQVKEQLLQSNPVLEAFGNAKTVRNDNSSRFGKYMDIEFDFKGDPLGGVISNYLLEKSRVVKQPRGERNFHVFYQLLSGASEELLYKLKLERDFSRYNYLSLDSAKVNGVDDAANFRTVRNAMQIVGFLDHEAEAVLEVVAAVLKLGNIEFKPESRVNGLDESKIKDKNELKEICELTSIDQVVLERAFSFRTVEAKQEKVSTTLNVAQAYYARDALAKNLYSRLFSWLVNRINESIKAQTKVRKKVMGVLDIYGFEIFEDNSFEQFIINYCNEKLQQIFIELTLKEEQEEYIREDIEWTHIDYFNNAIICDLIENNTNGILAMLDEECLRPGTVTDETFLEKLNQVCATHQHFESRMSKCSRFLNDTTLPHSCFRIQHYAGKVLYQVEGFVDKNNDLLYRDLSQAMWKAGHSLIKSLFPEGNPAKVNLKRPPTAGSQFKASVATLMRNLQTKNPNYIRCIKPNDKKAAHIFNESLVCHQIRYLGLLENVRVRRAGYAFRQAYEPCLERYKMLCKQTWPHWKGPARSGVEVLFNELEIPVEEHSFGRSKIFIRNPRTLFQLEDLRKQRLEDLATLIQKIYRGWKCRTHFLLMKRSQVVIAAWYRRYAQQKRYQQIKSSALVIQSYIRGWKARKILRELKHQKRCKEAATTIAAYWHGTQARRELKRLKEEARRKHAVAVIWAYWLGLKVRREYRKFFRANAGKKIYEFTLQRIVQKYLLEMKNKMPSLSPIDKNWPSRPYLFLDSTHKELKRIFHLWRCKKYRDQFTDQQKLIYEEKLEASELFKDKKALYPSSVGQPFQGAYLEINKNPKYKKLKDAIEEKIIIAEVVNKINRANGKSTSRIFLLTNNNLLLADQKSGQIKSEVPLVDVTKVSMSSQNDGFFAVHLKEGSEAASKGDFLFSSDHLIEMATKLYRTTLSQTKQKLNIEISDEFLVQFRQDKVCVKFIQGNQKNGSVPTCKRKNNRLLEVAVP</sequence>
<proteinExistence type="evidence at protein level"/>
<gene>
    <name type="primary">Myo1b</name>
</gene>
<reference key="1">
    <citation type="journal article" date="1993" name="J. Cell Biol.">
        <title>Mammalian myosin I alpha, I beta, and I gamma: new widely expressed genes of the myosin I family.</title>
        <authorList>
            <person name="Sherr E.H."/>
            <person name="Joyce M.P."/>
            <person name="Greene L.A."/>
        </authorList>
    </citation>
    <scope>NUCLEOTIDE SEQUENCE [MRNA] (ISOFORM 2)</scope>
    <source>
        <strain>C57BL/6J</strain>
        <tissue>Cerebellum</tissue>
    </source>
</reference>
<reference key="2">
    <citation type="journal article" date="2005" name="Science">
        <title>The transcriptional landscape of the mammalian genome.</title>
        <authorList>
            <person name="Carninci P."/>
            <person name="Kasukawa T."/>
            <person name="Katayama S."/>
            <person name="Gough J."/>
            <person name="Frith M.C."/>
            <person name="Maeda N."/>
            <person name="Oyama R."/>
            <person name="Ravasi T."/>
            <person name="Lenhard B."/>
            <person name="Wells C."/>
            <person name="Kodzius R."/>
            <person name="Shimokawa K."/>
            <person name="Bajic V.B."/>
            <person name="Brenner S.E."/>
            <person name="Batalov S."/>
            <person name="Forrest A.R."/>
            <person name="Zavolan M."/>
            <person name="Davis M.J."/>
            <person name="Wilming L.G."/>
            <person name="Aidinis V."/>
            <person name="Allen J.E."/>
            <person name="Ambesi-Impiombato A."/>
            <person name="Apweiler R."/>
            <person name="Aturaliya R.N."/>
            <person name="Bailey T.L."/>
            <person name="Bansal M."/>
            <person name="Baxter L."/>
            <person name="Beisel K.W."/>
            <person name="Bersano T."/>
            <person name="Bono H."/>
            <person name="Chalk A.M."/>
            <person name="Chiu K.P."/>
            <person name="Choudhary V."/>
            <person name="Christoffels A."/>
            <person name="Clutterbuck D.R."/>
            <person name="Crowe M.L."/>
            <person name="Dalla E."/>
            <person name="Dalrymple B.P."/>
            <person name="de Bono B."/>
            <person name="Della Gatta G."/>
            <person name="di Bernardo D."/>
            <person name="Down T."/>
            <person name="Engstrom P."/>
            <person name="Fagiolini M."/>
            <person name="Faulkner G."/>
            <person name="Fletcher C.F."/>
            <person name="Fukushima T."/>
            <person name="Furuno M."/>
            <person name="Futaki S."/>
            <person name="Gariboldi M."/>
            <person name="Georgii-Hemming P."/>
            <person name="Gingeras T.R."/>
            <person name="Gojobori T."/>
            <person name="Green R.E."/>
            <person name="Gustincich S."/>
            <person name="Harbers M."/>
            <person name="Hayashi Y."/>
            <person name="Hensch T.K."/>
            <person name="Hirokawa N."/>
            <person name="Hill D."/>
            <person name="Huminiecki L."/>
            <person name="Iacono M."/>
            <person name="Ikeo K."/>
            <person name="Iwama A."/>
            <person name="Ishikawa T."/>
            <person name="Jakt M."/>
            <person name="Kanapin A."/>
            <person name="Katoh M."/>
            <person name="Kawasawa Y."/>
            <person name="Kelso J."/>
            <person name="Kitamura H."/>
            <person name="Kitano H."/>
            <person name="Kollias G."/>
            <person name="Krishnan S.P."/>
            <person name="Kruger A."/>
            <person name="Kummerfeld S.K."/>
            <person name="Kurochkin I.V."/>
            <person name="Lareau L.F."/>
            <person name="Lazarevic D."/>
            <person name="Lipovich L."/>
            <person name="Liu J."/>
            <person name="Liuni S."/>
            <person name="McWilliam S."/>
            <person name="Madan Babu M."/>
            <person name="Madera M."/>
            <person name="Marchionni L."/>
            <person name="Matsuda H."/>
            <person name="Matsuzawa S."/>
            <person name="Miki H."/>
            <person name="Mignone F."/>
            <person name="Miyake S."/>
            <person name="Morris K."/>
            <person name="Mottagui-Tabar S."/>
            <person name="Mulder N."/>
            <person name="Nakano N."/>
            <person name="Nakauchi H."/>
            <person name="Ng P."/>
            <person name="Nilsson R."/>
            <person name="Nishiguchi S."/>
            <person name="Nishikawa S."/>
            <person name="Nori F."/>
            <person name="Ohara O."/>
            <person name="Okazaki Y."/>
            <person name="Orlando V."/>
            <person name="Pang K.C."/>
            <person name="Pavan W.J."/>
            <person name="Pavesi G."/>
            <person name="Pesole G."/>
            <person name="Petrovsky N."/>
            <person name="Piazza S."/>
            <person name="Reed J."/>
            <person name="Reid J.F."/>
            <person name="Ring B.Z."/>
            <person name="Ringwald M."/>
            <person name="Rost B."/>
            <person name="Ruan Y."/>
            <person name="Salzberg S.L."/>
            <person name="Sandelin A."/>
            <person name="Schneider C."/>
            <person name="Schoenbach C."/>
            <person name="Sekiguchi K."/>
            <person name="Semple C.A."/>
            <person name="Seno S."/>
            <person name="Sessa L."/>
            <person name="Sheng Y."/>
            <person name="Shibata Y."/>
            <person name="Shimada H."/>
            <person name="Shimada K."/>
            <person name="Silva D."/>
            <person name="Sinclair B."/>
            <person name="Sperling S."/>
            <person name="Stupka E."/>
            <person name="Sugiura K."/>
            <person name="Sultana R."/>
            <person name="Takenaka Y."/>
            <person name="Taki K."/>
            <person name="Tammoja K."/>
            <person name="Tan S.L."/>
            <person name="Tang S."/>
            <person name="Taylor M.S."/>
            <person name="Tegner J."/>
            <person name="Teichmann S.A."/>
            <person name="Ueda H.R."/>
            <person name="van Nimwegen E."/>
            <person name="Verardo R."/>
            <person name="Wei C.L."/>
            <person name="Yagi K."/>
            <person name="Yamanishi H."/>
            <person name="Zabarovsky E."/>
            <person name="Zhu S."/>
            <person name="Zimmer A."/>
            <person name="Hide W."/>
            <person name="Bult C."/>
            <person name="Grimmond S.M."/>
            <person name="Teasdale R.D."/>
            <person name="Liu E.T."/>
            <person name="Brusic V."/>
            <person name="Quackenbush J."/>
            <person name="Wahlestedt C."/>
            <person name="Mattick J.S."/>
            <person name="Hume D.A."/>
            <person name="Kai C."/>
            <person name="Sasaki D."/>
            <person name="Tomaru Y."/>
            <person name="Fukuda S."/>
            <person name="Kanamori-Katayama M."/>
            <person name="Suzuki M."/>
            <person name="Aoki J."/>
            <person name="Arakawa T."/>
            <person name="Iida J."/>
            <person name="Imamura K."/>
            <person name="Itoh M."/>
            <person name="Kato T."/>
            <person name="Kawaji H."/>
            <person name="Kawagashira N."/>
            <person name="Kawashima T."/>
            <person name="Kojima M."/>
            <person name="Kondo S."/>
            <person name="Konno H."/>
            <person name="Nakano K."/>
            <person name="Ninomiya N."/>
            <person name="Nishio T."/>
            <person name="Okada M."/>
            <person name="Plessy C."/>
            <person name="Shibata K."/>
            <person name="Shiraki T."/>
            <person name="Suzuki S."/>
            <person name="Tagami M."/>
            <person name="Waki K."/>
            <person name="Watahiki A."/>
            <person name="Okamura-Oho Y."/>
            <person name="Suzuki H."/>
            <person name="Kawai J."/>
            <person name="Hayashizaki Y."/>
        </authorList>
    </citation>
    <scope>NUCLEOTIDE SEQUENCE [LARGE SCALE MRNA] (ISOFORM 1)</scope>
    <source>
        <strain>C57BL/6J</strain>
    </source>
</reference>
<reference key="3">
    <citation type="submission" date="2005-07" db="EMBL/GenBank/DDBJ databases">
        <authorList>
            <person name="Mural R.J."/>
            <person name="Adams M.D."/>
            <person name="Myers E.W."/>
            <person name="Smith H.O."/>
            <person name="Venter J.C."/>
        </authorList>
    </citation>
    <scope>NUCLEOTIDE SEQUENCE [LARGE SCALE GENOMIC DNA]</scope>
</reference>
<reference key="4">
    <citation type="journal article" date="2004" name="Genome Res.">
        <title>The status, quality, and expansion of the NIH full-length cDNA project: the Mammalian Gene Collection (MGC).</title>
        <authorList>
            <consortium name="The MGC Project Team"/>
        </authorList>
    </citation>
    <scope>NUCLEOTIDE SEQUENCE [LARGE SCALE MRNA] (ISOFORM 1)</scope>
    <source>
        <strain>FVB/N-3</strain>
        <tissue>Mammary tumor</tissue>
    </source>
</reference>
<reference key="5">
    <citation type="journal article" date="1993" name="FEBS Lett.">
        <title>Molecular cloning of a mouse myosin I expressed in brain.</title>
        <authorList>
            <person name="Koslovsky J.S."/>
            <person name="Qian C."/>
            <person name="Jiang X."/>
            <person name="Mercer J.A."/>
        </authorList>
    </citation>
    <scope>NUCLEOTIDE SEQUENCE [MRNA] OF 13-1107 (ISOFORM 1)</scope>
    <source>
        <strain>C57BL/6J</strain>
        <tissue>Brain</tissue>
    </source>
</reference>
<reference key="6">
    <citation type="journal article" date="2010" name="Cell">
        <title>A tissue-specific atlas of mouse protein phosphorylation and expression.</title>
        <authorList>
            <person name="Huttlin E.L."/>
            <person name="Jedrychowski M.P."/>
            <person name="Elias J.E."/>
            <person name="Goswami T."/>
            <person name="Rad R."/>
            <person name="Beausoleil S.A."/>
            <person name="Villen J."/>
            <person name="Haas W."/>
            <person name="Sowa M.E."/>
            <person name="Gygi S.P."/>
        </authorList>
    </citation>
    <scope>IDENTIFICATION BY MASS SPECTROMETRY [LARGE SCALE ANALYSIS]</scope>
    <source>
        <tissue>Brown adipose tissue</tissue>
        <tissue>Kidney</tissue>
        <tissue>Liver</tissue>
        <tissue>Lung</tissue>
        <tissue>Pancreas</tissue>
        <tissue>Spleen</tissue>
    </source>
</reference>
<feature type="chain" id="PRO_0000123443" description="Unconventional myosin-Ib">
    <location>
        <begin position="1"/>
        <end position="1107"/>
    </location>
</feature>
<feature type="domain" description="Myosin motor" evidence="4">
    <location>
        <begin position="15"/>
        <end position="701"/>
    </location>
</feature>
<feature type="domain" description="IQ 1" evidence="3">
    <location>
        <begin position="704"/>
        <end position="727"/>
    </location>
</feature>
<feature type="domain" description="IQ 2" evidence="3">
    <location>
        <begin position="728"/>
        <end position="749"/>
    </location>
</feature>
<feature type="domain" description="IQ 3" evidence="3">
    <location>
        <begin position="750"/>
        <end position="778"/>
    </location>
</feature>
<feature type="domain" description="IQ 4" evidence="3">
    <location>
        <begin position="780"/>
        <end position="807"/>
    </location>
</feature>
<feature type="domain" description="IQ 5" evidence="3">
    <location>
        <begin position="808"/>
        <end position="837"/>
    </location>
</feature>
<feature type="domain" description="TH1" evidence="5">
    <location>
        <begin position="923"/>
        <end position="1107"/>
    </location>
</feature>
<feature type="region of interest" description="Actin-binding" evidence="2">
    <location>
        <begin position="592"/>
        <end position="599"/>
    </location>
</feature>
<feature type="binding site" evidence="2">
    <location>
        <begin position="108"/>
        <end position="115"/>
    </location>
    <ligand>
        <name>ATP</name>
        <dbReference type="ChEBI" id="CHEBI:30616"/>
    </ligand>
</feature>
<feature type="modified residue" description="Phosphoserine" evidence="1">
    <location>
        <position position="60"/>
    </location>
</feature>
<feature type="cross-link" description="Glycyl lysine isopeptide (Lys-Gly) (interchain with G-Cter in SUMO1); alternate" evidence="1">
    <location>
        <position position="287"/>
    </location>
</feature>
<feature type="cross-link" description="Glycyl lysine isopeptide (Lys-Gly) (interchain with G-Cter in SUMO2); alternate" evidence="1">
    <location>
        <position position="287"/>
    </location>
</feature>
<feature type="splice variant" id="VSP_003347" description="In isoform 2." evidence="6">
    <location>
        <begin position="791"/>
        <end position="819"/>
    </location>
</feature>
<feature type="sequence conflict" description="In Ref. 5; CAA49604." evidence="7" ref="5">
    <original>I</original>
    <variation>R</variation>
    <location>
        <position position="44"/>
    </location>
</feature>
<feature type="sequence conflict" description="In Ref. 5; CAA49604." evidence="7" ref="5">
    <original>I</original>
    <variation>Y</variation>
    <location>
        <position position="260"/>
    </location>
</feature>
<feature type="sequence conflict" description="In Ref. 1; AAA39800." evidence="7" ref="1">
    <original>N</original>
    <variation>I</variation>
    <location>
        <position position="304"/>
    </location>
</feature>
<feature type="sequence conflict" description="In Ref. 1; AAA39800." evidence="7" ref="1">
    <original>KEICELTSIDQ</original>
    <variation>NEKFASRPASVK</variation>
    <location>
        <begin position="307"/>
        <end position="317"/>
    </location>
</feature>
<feature type="sequence conflict" description="In Ref. 1; AAA39800." evidence="7" ref="1">
    <original>Q</original>
    <variation>R</variation>
    <location>
        <position position="333"/>
    </location>
</feature>
<feature type="sequence conflict" description="In Ref. 1; AAA39800." evidence="7" ref="1">
    <original>G</original>
    <variation>D</variation>
    <location>
        <position position="546"/>
    </location>
</feature>
<feature type="sequence conflict" description="In Ref. 5; CAA49604." evidence="7" ref="5">
    <original>AG</original>
    <variation>RS</variation>
    <location>
        <begin position="570"/>
        <end position="571"/>
    </location>
</feature>
<feature type="sequence conflict" description="In Ref. 5; CAA49604." evidence="7" ref="5">
    <original>A</original>
    <variation>E</variation>
    <location>
        <position position="742"/>
    </location>
</feature>
<feature type="sequence conflict" description="In Ref. 5; CAA49604." evidence="7" ref="5">
    <original>KH</original>
    <variation>ND</variation>
    <location>
        <begin position="809"/>
        <end position="810"/>
    </location>
</feature>
<protein>
    <recommendedName>
        <fullName>Unconventional myosin-Ib</fullName>
    </recommendedName>
    <alternativeName>
        <fullName>MIH-L</fullName>
    </alternativeName>
    <alternativeName>
        <fullName>Myosin I alpha</fullName>
        <shortName>MMI-alpha</shortName>
        <shortName>MMIa</shortName>
    </alternativeName>
</protein>
<organism>
    <name type="scientific">Mus musculus</name>
    <name type="common">Mouse</name>
    <dbReference type="NCBI Taxonomy" id="10090"/>
    <lineage>
        <taxon>Eukaryota</taxon>
        <taxon>Metazoa</taxon>
        <taxon>Chordata</taxon>
        <taxon>Craniata</taxon>
        <taxon>Vertebrata</taxon>
        <taxon>Euteleostomi</taxon>
        <taxon>Mammalia</taxon>
        <taxon>Eutheria</taxon>
        <taxon>Euarchontoglires</taxon>
        <taxon>Glires</taxon>
        <taxon>Rodentia</taxon>
        <taxon>Myomorpha</taxon>
        <taxon>Muroidea</taxon>
        <taxon>Muridae</taxon>
        <taxon>Murinae</taxon>
        <taxon>Mus</taxon>
        <taxon>Mus</taxon>
    </lineage>
</organism>
<evidence type="ECO:0000250" key="1">
    <source>
        <dbReference type="UniProtKB" id="O43795"/>
    </source>
</evidence>
<evidence type="ECO:0000255" key="2"/>
<evidence type="ECO:0000255" key="3">
    <source>
        <dbReference type="PROSITE-ProRule" id="PRU00116"/>
    </source>
</evidence>
<evidence type="ECO:0000255" key="4">
    <source>
        <dbReference type="PROSITE-ProRule" id="PRU00782"/>
    </source>
</evidence>
<evidence type="ECO:0000255" key="5">
    <source>
        <dbReference type="PROSITE-ProRule" id="PRU01093"/>
    </source>
</evidence>
<evidence type="ECO:0000303" key="6">
    <source>
    </source>
</evidence>
<evidence type="ECO:0000305" key="7"/>
<accession>P46735</accession>
<accession>P70244</accession>
<accession>Q80VD8</accession>